<gene>
    <name type="primary">ompP2</name>
</gene>
<keyword id="KW-0998">Cell outer membrane</keyword>
<keyword id="KW-0406">Ion transport</keyword>
<keyword id="KW-0472">Membrane</keyword>
<keyword id="KW-0626">Porin</keyword>
<keyword id="KW-0732">Signal</keyword>
<keyword id="KW-0812">Transmembrane</keyword>
<keyword id="KW-1134">Transmembrane beta strand</keyword>
<keyword id="KW-0813">Transport</keyword>
<feature type="signal peptide">
    <location>
        <begin position="1"/>
        <end position="20"/>
    </location>
</feature>
<feature type="chain" id="PRO_0000025260" description="Outer membrane protein P2">
    <location>
        <begin position="21"/>
        <end position="385"/>
    </location>
</feature>
<feature type="sequence variant" description="In strain: B4.">
    <original>R</original>
    <variation>G</variation>
    <location>
        <position position="190"/>
    </location>
</feature>
<feature type="sequence variant" description="In strain: B4.">
    <original>G</original>
    <variation>S</variation>
    <location>
        <position position="237"/>
    </location>
</feature>
<feature type="sequence variant" description="In strain: B4.">
    <original>T</original>
    <variation>A</variation>
    <location>
        <position position="280"/>
    </location>
</feature>
<feature type="sequence variant" description="In strain: B2 and B3.">
    <original>D</original>
    <variation>N</variation>
    <location>
        <position position="281"/>
    </location>
</feature>
<feature type="sequence variant" description="In strain: D1.">
    <original>G</original>
    <variation>D</variation>
    <location>
        <position position="285"/>
    </location>
</feature>
<feature type="sequence variant" description="In strain: B3 and B4.">
    <original>S</original>
    <variation>N</variation>
    <location>
        <position position="286"/>
    </location>
</feature>
<feature type="sequence variant" description="In strain: B2, B3 and B4.">
    <original>E</original>
    <variation>K</variation>
    <location>
        <position position="296"/>
    </location>
</feature>
<name>OPP23_HAEIF</name>
<organism>
    <name type="scientific">Haemophilus influenzae</name>
    <dbReference type="NCBI Taxonomy" id="727"/>
    <lineage>
        <taxon>Bacteria</taxon>
        <taxon>Pseudomonadati</taxon>
        <taxon>Pseudomonadota</taxon>
        <taxon>Gammaproteobacteria</taxon>
        <taxon>Pasteurellales</taxon>
        <taxon>Pasteurellaceae</taxon>
        <taxon>Haemophilus</taxon>
    </lineage>
</organism>
<protein>
    <recommendedName>
        <fullName>Outer membrane protein P2</fullName>
        <shortName>OMP P2</shortName>
    </recommendedName>
</protein>
<sequence>MKKTLAALIVGAFAASAANAAVVYNNEGTNVELGGRLSIITEQSNSTVDDQEQQHGALRNAGSRFHIKATHNFGDGFYAQGYLETRLVSDYPESSSDHFGGITTKYAYVTLGNKAFGEVKLGRAKTIADGITSAEDKEYGVLNNKKYIPTNGNTVGYTYKGIDGLDGLVLGANYLLAQSRVPGGPSPFPRKQGEVYPQQISNGVQVGAKYDANNIIAGIAFGRTNYKTAGADFDPYGDFGLGRKEQVEGVLSTLGYRFSDLGLLVSLDSGYAKTKYYTTTDSSSGSQTITNPAYDEKRSFVSPGFQYELMEDTNVYGNFKYERTSVNQGKNTREQAVLFGVDHKLHKQVLTYIEGAYARTKTNDKGKTEKTGKEKSVGVGLRVYF</sequence>
<dbReference type="EMBL" id="X73380">
    <property type="protein sequence ID" value="CAA51797.1"/>
    <property type="molecule type" value="Genomic_DNA"/>
</dbReference>
<dbReference type="EMBL" id="X73381">
    <property type="protein sequence ID" value="CAA51798.1"/>
    <property type="molecule type" value="Genomic_DNA"/>
</dbReference>
<dbReference type="EMBL" id="X73382">
    <property type="protein sequence ID" value="CAA51799.1"/>
    <property type="molecule type" value="Genomic_DNA"/>
</dbReference>
<dbReference type="EMBL" id="X73384">
    <property type="protein sequence ID" value="CAA51801.1"/>
    <property type="molecule type" value="Genomic_DNA"/>
</dbReference>
<dbReference type="EMBL" id="X73385">
    <property type="protein sequence ID" value="CAA51802.1"/>
    <property type="molecule type" value="Genomic_DNA"/>
</dbReference>
<dbReference type="PIR" id="S68066">
    <property type="entry name" value="S68066"/>
</dbReference>
<dbReference type="PIR" id="S68067">
    <property type="entry name" value="S68067"/>
</dbReference>
<dbReference type="PIR" id="S68070">
    <property type="entry name" value="S68070"/>
</dbReference>
<dbReference type="SMR" id="P46025"/>
<dbReference type="GO" id="GO:0009279">
    <property type="term" value="C:cell outer membrane"/>
    <property type="evidence" value="ECO:0007669"/>
    <property type="project" value="UniProtKB-SubCell"/>
</dbReference>
<dbReference type="GO" id="GO:0046930">
    <property type="term" value="C:pore complex"/>
    <property type="evidence" value="ECO:0007669"/>
    <property type="project" value="UniProtKB-KW"/>
</dbReference>
<dbReference type="GO" id="GO:0015288">
    <property type="term" value="F:porin activity"/>
    <property type="evidence" value="ECO:0007669"/>
    <property type="project" value="UniProtKB-KW"/>
</dbReference>
<dbReference type="GO" id="GO:0006811">
    <property type="term" value="P:monoatomic ion transport"/>
    <property type="evidence" value="ECO:0007669"/>
    <property type="project" value="UniProtKB-KW"/>
</dbReference>
<dbReference type="CDD" id="cd00342">
    <property type="entry name" value="gram_neg_porins"/>
    <property type="match status" value="1"/>
</dbReference>
<dbReference type="Gene3D" id="2.40.160.10">
    <property type="entry name" value="Porin"/>
    <property type="match status" value="1"/>
</dbReference>
<dbReference type="InterPro" id="IPR050298">
    <property type="entry name" value="Gram-neg_bact_OMP"/>
</dbReference>
<dbReference type="InterPro" id="IPR033900">
    <property type="entry name" value="Gram_neg_porin_domain"/>
</dbReference>
<dbReference type="InterPro" id="IPR023614">
    <property type="entry name" value="Porin_dom_sf"/>
</dbReference>
<dbReference type="PANTHER" id="PTHR34501:SF2">
    <property type="entry name" value="OUTER MEMBRANE PORIN F-RELATED"/>
    <property type="match status" value="1"/>
</dbReference>
<dbReference type="PANTHER" id="PTHR34501">
    <property type="entry name" value="PROTEIN YDDL-RELATED"/>
    <property type="match status" value="1"/>
</dbReference>
<dbReference type="Pfam" id="PF13609">
    <property type="entry name" value="Porin_4"/>
    <property type="match status" value="1"/>
</dbReference>
<dbReference type="SUPFAM" id="SSF56935">
    <property type="entry name" value="Porins"/>
    <property type="match status" value="1"/>
</dbReference>
<accession>P46025</accession>
<proteinExistence type="inferred from homology"/>
<reference key="1">
    <citation type="journal article" date="1994" name="Mol. Microbiol.">
        <title>Antigenic drift of non-encapsulated Haemophilus influenzae major outer membrane protein P2 in patients with chronic bronchitis is caused by point mutations.</title>
        <authorList>
            <person name="Duim B."/>
            <person name="van Alphen L."/>
            <person name="Eijk P."/>
            <person name="Jansen H.M."/>
            <person name="Dankert J."/>
        </authorList>
    </citation>
    <scope>NUCLEOTIDE SEQUENCE [GENOMIC DNA]</scope>
    <source>
        <strain>B1</strain>
        <strain>B2</strain>
        <strain>B3</strain>
        <strain>B4</strain>
        <strain>D1</strain>
    </source>
</reference>
<reference key="2">
    <citation type="journal article" date="1993" name="Microb. Pathog.">
        <title>Genetic analysis of the diversity in outer membrane protein P2 of non-encapsulated Haemophilus influenzae.</title>
        <authorList>
            <person name="Duim B."/>
            <person name="Dankert J."/>
            <person name="Jansen H.M."/>
            <person name="van Alphen L."/>
        </authorList>
    </citation>
    <scope>NUCLEOTIDE SEQUENCE [GENOMIC DNA]</scope>
    <source>
        <strain>B1</strain>
        <strain>B2</strain>
        <strain>B3</strain>
        <strain>B4</strain>
        <strain>D1</strain>
    </source>
</reference>
<comment type="function">
    <text evidence="1">Forms pores that allow passive diffusion of small molecules across the outer membrane.</text>
</comment>
<comment type="subunit">
    <text evidence="1">Homotrimer.</text>
</comment>
<comment type="subcellular location">
    <subcellularLocation>
        <location>Cell outer membrane</location>
        <topology>Multi-pass membrane protein</topology>
    </subcellularLocation>
</comment>
<comment type="miscellaneous">
    <text>The sequence of strain B1 is shown here.</text>
</comment>
<comment type="similarity">
    <text evidence="2">Belongs to the Gram-negative porin family.</text>
</comment>
<evidence type="ECO:0000250" key="1"/>
<evidence type="ECO:0000305" key="2"/>